<proteinExistence type="evidence at transcript level"/>
<protein>
    <recommendedName>
        <fullName>Protein kinase PINOID</fullName>
        <shortName>OsPID</shortName>
        <ecNumber>2.7.11.1</ecNumber>
    </recommendedName>
</protein>
<comment type="function">
    <text evidence="4">Serine/threonine-protein kinase involved in the regulation of auxin signaling. May control polar auxin transport and probably plays a role in the pattern formation and organogenesis in the rice shoot.</text>
</comment>
<comment type="catalytic activity">
    <reaction>
        <text>L-seryl-[protein] + ATP = O-phospho-L-seryl-[protein] + ADP + H(+)</text>
        <dbReference type="Rhea" id="RHEA:17989"/>
        <dbReference type="Rhea" id="RHEA-COMP:9863"/>
        <dbReference type="Rhea" id="RHEA-COMP:11604"/>
        <dbReference type="ChEBI" id="CHEBI:15378"/>
        <dbReference type="ChEBI" id="CHEBI:29999"/>
        <dbReference type="ChEBI" id="CHEBI:30616"/>
        <dbReference type="ChEBI" id="CHEBI:83421"/>
        <dbReference type="ChEBI" id="CHEBI:456216"/>
        <dbReference type="EC" id="2.7.11.1"/>
    </reaction>
</comment>
<comment type="catalytic activity">
    <reaction>
        <text>L-threonyl-[protein] + ATP = O-phospho-L-threonyl-[protein] + ADP + H(+)</text>
        <dbReference type="Rhea" id="RHEA:46608"/>
        <dbReference type="Rhea" id="RHEA-COMP:11060"/>
        <dbReference type="Rhea" id="RHEA-COMP:11605"/>
        <dbReference type="ChEBI" id="CHEBI:15378"/>
        <dbReference type="ChEBI" id="CHEBI:30013"/>
        <dbReference type="ChEBI" id="CHEBI:30616"/>
        <dbReference type="ChEBI" id="CHEBI:61977"/>
        <dbReference type="ChEBI" id="CHEBI:456216"/>
        <dbReference type="EC" id="2.7.11.1"/>
    </reaction>
</comment>
<comment type="tissue specificity">
    <text evidence="4">Expressed in the shoot apical meristem at the boundary of the new forming meristems. Expressed in the regions where panicle branches are produced, in developing flower and vascular bundles.</text>
</comment>
<comment type="induction">
    <text evidence="4">By auxin.</text>
</comment>
<comment type="miscellaneous">
    <text>Plants overexpressing PID show variety of development abnormalities, such as delay of adventitious root development, curled growth of shoots and agravitropism.</text>
</comment>
<comment type="similarity">
    <text evidence="1">Belongs to the protein kinase superfamily. Ser/Thr protein kinase family.</text>
</comment>
<feature type="chain" id="PRO_0000411972" description="Protein kinase PINOID">
    <location>
        <begin position="1"/>
        <end position="484"/>
    </location>
</feature>
<feature type="domain" description="Protein kinase" evidence="1">
    <location>
        <begin position="111"/>
        <end position="427"/>
    </location>
</feature>
<feature type="domain" description="AGC-kinase C-terminal">
    <location>
        <begin position="428"/>
        <end position="484"/>
    </location>
</feature>
<feature type="region of interest" description="Disordered" evidence="3">
    <location>
        <begin position="445"/>
        <end position="484"/>
    </location>
</feature>
<feature type="compositionally biased region" description="Low complexity" evidence="3">
    <location>
        <begin position="472"/>
        <end position="484"/>
    </location>
</feature>
<feature type="active site" description="Proton acceptor" evidence="1 2">
    <location>
        <position position="242"/>
    </location>
</feature>
<feature type="binding site" evidence="1">
    <location>
        <begin position="117"/>
        <end position="125"/>
    </location>
    <ligand>
        <name>ATP</name>
        <dbReference type="ChEBI" id="CHEBI:30616"/>
    </ligand>
</feature>
<feature type="binding site" evidence="1">
    <location>
        <position position="145"/>
    </location>
    <ligand>
        <name>ATP</name>
        <dbReference type="ChEBI" id="CHEBI:30616"/>
    </ligand>
</feature>
<accession>Q2QM77</accession>
<accession>A0A0P0YCM1</accession>
<organism>
    <name type="scientific">Oryza sativa subsp. japonica</name>
    <name type="common">Rice</name>
    <dbReference type="NCBI Taxonomy" id="39947"/>
    <lineage>
        <taxon>Eukaryota</taxon>
        <taxon>Viridiplantae</taxon>
        <taxon>Streptophyta</taxon>
        <taxon>Embryophyta</taxon>
        <taxon>Tracheophyta</taxon>
        <taxon>Spermatophyta</taxon>
        <taxon>Magnoliopsida</taxon>
        <taxon>Liliopsida</taxon>
        <taxon>Poales</taxon>
        <taxon>Poaceae</taxon>
        <taxon>BOP clade</taxon>
        <taxon>Oryzoideae</taxon>
        <taxon>Oryzeae</taxon>
        <taxon>Oryzinae</taxon>
        <taxon>Oryza</taxon>
        <taxon>Oryza sativa</taxon>
    </lineage>
</organism>
<evidence type="ECO:0000255" key="1">
    <source>
        <dbReference type="PROSITE-ProRule" id="PRU00159"/>
    </source>
</evidence>
<evidence type="ECO:0000255" key="2">
    <source>
        <dbReference type="PROSITE-ProRule" id="PRU10027"/>
    </source>
</evidence>
<evidence type="ECO:0000256" key="3">
    <source>
        <dbReference type="SAM" id="MobiDB-lite"/>
    </source>
</evidence>
<evidence type="ECO:0000269" key="4">
    <source>
    </source>
</evidence>
<dbReference type="EC" id="2.7.11.1"/>
<dbReference type="EMBL" id="DP000011">
    <property type="protein sequence ID" value="ABA99407.1"/>
    <property type="molecule type" value="Genomic_DNA"/>
</dbReference>
<dbReference type="EMBL" id="AP008218">
    <property type="protein sequence ID" value="BAF30287.1"/>
    <property type="molecule type" value="Genomic_DNA"/>
</dbReference>
<dbReference type="EMBL" id="AP014968">
    <property type="protein sequence ID" value="BAT18079.1"/>
    <property type="molecule type" value="Genomic_DNA"/>
</dbReference>
<dbReference type="EMBL" id="AK106290">
    <property type="protein sequence ID" value="BAG97667.1"/>
    <property type="molecule type" value="mRNA"/>
</dbReference>
<dbReference type="RefSeq" id="XP_015619092.1">
    <property type="nucleotide sequence ID" value="XM_015763606.1"/>
</dbReference>
<dbReference type="SMR" id="Q2QM77"/>
<dbReference type="FunCoup" id="Q2QM77">
    <property type="interactions" value="465"/>
</dbReference>
<dbReference type="STRING" id="39947.Q2QM77"/>
<dbReference type="iPTMnet" id="Q2QM77"/>
<dbReference type="PaxDb" id="39947-Q2QM77"/>
<dbReference type="EnsemblPlants" id="Os12t0614600-01">
    <property type="protein sequence ID" value="Os12t0614600-01"/>
    <property type="gene ID" value="Os12g0614600"/>
</dbReference>
<dbReference type="Gramene" id="Os12t0614600-01">
    <property type="protein sequence ID" value="Os12t0614600-01"/>
    <property type="gene ID" value="Os12g0614600"/>
</dbReference>
<dbReference type="KEGG" id="dosa:Os12g0614600"/>
<dbReference type="eggNOG" id="KOG0610">
    <property type="taxonomic scope" value="Eukaryota"/>
</dbReference>
<dbReference type="HOGENOM" id="CLU_000288_63_30_1"/>
<dbReference type="InParanoid" id="Q2QM77"/>
<dbReference type="OMA" id="PFAKFNS"/>
<dbReference type="OrthoDB" id="432483at2759"/>
<dbReference type="Proteomes" id="UP000000763">
    <property type="component" value="Chromosome 12"/>
</dbReference>
<dbReference type="Proteomes" id="UP000059680">
    <property type="component" value="Chromosome 12"/>
</dbReference>
<dbReference type="GO" id="GO:0005737">
    <property type="term" value="C:cytoplasm"/>
    <property type="evidence" value="ECO:0000318"/>
    <property type="project" value="GO_Central"/>
</dbReference>
<dbReference type="GO" id="GO:0005634">
    <property type="term" value="C:nucleus"/>
    <property type="evidence" value="ECO:0000318"/>
    <property type="project" value="GO_Central"/>
</dbReference>
<dbReference type="GO" id="GO:0005886">
    <property type="term" value="C:plasma membrane"/>
    <property type="evidence" value="ECO:0000318"/>
    <property type="project" value="GO_Central"/>
</dbReference>
<dbReference type="GO" id="GO:0005524">
    <property type="term" value="F:ATP binding"/>
    <property type="evidence" value="ECO:0007669"/>
    <property type="project" value="UniProtKB-KW"/>
</dbReference>
<dbReference type="GO" id="GO:0106310">
    <property type="term" value="F:protein serine kinase activity"/>
    <property type="evidence" value="ECO:0007669"/>
    <property type="project" value="RHEA"/>
</dbReference>
<dbReference type="GO" id="GO:0004674">
    <property type="term" value="F:protein serine/threonine kinase activity"/>
    <property type="evidence" value="ECO:0000318"/>
    <property type="project" value="GO_Central"/>
</dbReference>
<dbReference type="GO" id="GO:0009734">
    <property type="term" value="P:auxin-activated signaling pathway"/>
    <property type="evidence" value="ECO:0007669"/>
    <property type="project" value="UniProtKB-KW"/>
</dbReference>
<dbReference type="GO" id="GO:0009908">
    <property type="term" value="P:flower development"/>
    <property type="evidence" value="ECO:0000315"/>
    <property type="project" value="UniProtKB"/>
</dbReference>
<dbReference type="GO" id="GO:2000012">
    <property type="term" value="P:regulation of auxin polar transport"/>
    <property type="evidence" value="ECO:0000303"/>
    <property type="project" value="UniProtKB"/>
</dbReference>
<dbReference type="GO" id="GO:0048364">
    <property type="term" value="P:root development"/>
    <property type="evidence" value="ECO:0000315"/>
    <property type="project" value="UniProtKB"/>
</dbReference>
<dbReference type="GO" id="GO:0048367">
    <property type="term" value="P:shoot system development"/>
    <property type="evidence" value="ECO:0000315"/>
    <property type="project" value="UniProtKB"/>
</dbReference>
<dbReference type="CDD" id="cd05574">
    <property type="entry name" value="STKc_phototropin_like"/>
    <property type="match status" value="1"/>
</dbReference>
<dbReference type="FunFam" id="1.10.510.10:FF:000277">
    <property type="entry name" value="protein kinase PINOID"/>
    <property type="match status" value="1"/>
</dbReference>
<dbReference type="FunFam" id="3.30.200.20:FF:000351">
    <property type="entry name" value="protein kinase PINOID 2"/>
    <property type="match status" value="1"/>
</dbReference>
<dbReference type="FunFam" id="1.10.510.10:FF:000020">
    <property type="entry name" value="serine/threonine-protein kinase D6PK-like"/>
    <property type="match status" value="1"/>
</dbReference>
<dbReference type="Gene3D" id="3.30.200.20">
    <property type="entry name" value="Phosphorylase Kinase, domain 1"/>
    <property type="match status" value="1"/>
</dbReference>
<dbReference type="Gene3D" id="1.10.510.10">
    <property type="entry name" value="Transferase(Phosphotransferase) domain 1"/>
    <property type="match status" value="2"/>
</dbReference>
<dbReference type="InterPro" id="IPR011009">
    <property type="entry name" value="Kinase-like_dom_sf"/>
</dbReference>
<dbReference type="InterPro" id="IPR000719">
    <property type="entry name" value="Prot_kinase_dom"/>
</dbReference>
<dbReference type="InterPro" id="IPR008271">
    <property type="entry name" value="Ser/Thr_kinase_AS"/>
</dbReference>
<dbReference type="PANTHER" id="PTHR45637">
    <property type="entry name" value="FLIPPASE KINASE 1-RELATED"/>
    <property type="match status" value="1"/>
</dbReference>
<dbReference type="Pfam" id="PF00069">
    <property type="entry name" value="Pkinase"/>
    <property type="match status" value="2"/>
</dbReference>
<dbReference type="SMART" id="SM00220">
    <property type="entry name" value="S_TKc"/>
    <property type="match status" value="1"/>
</dbReference>
<dbReference type="SUPFAM" id="SSF56112">
    <property type="entry name" value="Protein kinase-like (PK-like)"/>
    <property type="match status" value="1"/>
</dbReference>
<dbReference type="PROSITE" id="PS50011">
    <property type="entry name" value="PROTEIN_KINASE_DOM"/>
    <property type="match status" value="1"/>
</dbReference>
<dbReference type="PROSITE" id="PS00108">
    <property type="entry name" value="PROTEIN_KINASE_ST"/>
    <property type="match status" value="1"/>
</dbReference>
<name>PID_ORYSJ</name>
<reference key="1">
    <citation type="journal article" date="2005" name="BMC Biol.">
        <title>The sequence of rice chromosomes 11 and 12, rich in disease resistance genes and recent gene duplications.</title>
        <authorList>
            <consortium name="The rice chromosomes 11 and 12 sequencing consortia"/>
        </authorList>
    </citation>
    <scope>NUCLEOTIDE SEQUENCE [LARGE SCALE GENOMIC DNA]</scope>
    <source>
        <strain>cv. Nipponbare</strain>
    </source>
</reference>
<reference key="2">
    <citation type="journal article" date="2005" name="Nature">
        <title>The map-based sequence of the rice genome.</title>
        <authorList>
            <consortium name="International rice genome sequencing project (IRGSP)"/>
        </authorList>
    </citation>
    <scope>NUCLEOTIDE SEQUENCE [LARGE SCALE GENOMIC DNA]</scope>
    <source>
        <strain>cv. Nipponbare</strain>
    </source>
</reference>
<reference key="3">
    <citation type="journal article" date="2008" name="Nucleic Acids Res.">
        <title>The rice annotation project database (RAP-DB): 2008 update.</title>
        <authorList>
            <consortium name="The rice annotation project (RAP)"/>
        </authorList>
    </citation>
    <scope>GENOME REANNOTATION</scope>
    <source>
        <strain>cv. Nipponbare</strain>
    </source>
</reference>
<reference key="4">
    <citation type="journal article" date="2013" name="Rice">
        <title>Improvement of the Oryza sativa Nipponbare reference genome using next generation sequence and optical map data.</title>
        <authorList>
            <person name="Kawahara Y."/>
            <person name="de la Bastide M."/>
            <person name="Hamilton J.P."/>
            <person name="Kanamori H."/>
            <person name="McCombie W.R."/>
            <person name="Ouyang S."/>
            <person name="Schwartz D.C."/>
            <person name="Tanaka T."/>
            <person name="Wu J."/>
            <person name="Zhou S."/>
            <person name="Childs K.L."/>
            <person name="Davidson R.M."/>
            <person name="Lin H."/>
            <person name="Quesada-Ocampo L."/>
            <person name="Vaillancourt B."/>
            <person name="Sakai H."/>
            <person name="Lee S.S."/>
            <person name="Kim J."/>
            <person name="Numa H."/>
            <person name="Itoh T."/>
            <person name="Buell C.R."/>
            <person name="Matsumoto T."/>
        </authorList>
    </citation>
    <scope>GENOME REANNOTATION</scope>
    <source>
        <strain>cv. Nipponbare</strain>
    </source>
</reference>
<reference key="5">
    <citation type="journal article" date="2003" name="Science">
        <title>Collection, mapping, and annotation of over 28,000 cDNA clones from japonica rice.</title>
        <authorList>
            <consortium name="The rice full-length cDNA consortium"/>
        </authorList>
    </citation>
    <scope>NUCLEOTIDE SEQUENCE [LARGE SCALE MRNA]</scope>
    <source>
        <strain>cv. Nipponbare</strain>
    </source>
</reference>
<reference key="6">
    <citation type="journal article" date="2007" name="Plant Cell Physiol.">
        <title>Characterization of OsPID, the rice ortholog of PINOID, and its possible involvement in the control of polar auxin transport.</title>
        <authorList>
            <person name="Morita Y."/>
            <person name="Kyozuka J."/>
        </authorList>
    </citation>
    <scope>FUNCTION</scope>
    <scope>TISSUE SPECIFICITY</scope>
    <scope>INDUCTION BY AUXIN</scope>
</reference>
<sequence>MVAAVRAPVKPEMVELSPAAMERYSSDADTTAPNSSLSSAASSTGSLARCSSLSRLSFDCSPSAAVAAAATSCSPPRASVLLRPHRSGDVAWAAIRAASTTSAAPLGPRDFKLVRRIGGGDIGTVYLCRLRSSPERESPCMYAMKVVDRRAVARKQKLGRAAAEKRILRQLDHPFLPTLFADFDATPHFSCAVMEFCPGGDLHSLRHRMPSRRFPLPSARFYAAEVLLAIEYLHMMGIVYRDLKPENVLIRADGHIMLTDFDLSLQSTTSPSLDGDTDTDDEASGGASCFPDHLLRFKRRRNAVAAPRPRFVAEPVDARSCSFVGTHEYVAPEVASGGAHGAAVDWWAYGVFLYELIYGRTPFAGATNEATLRNIVRRPLAFPSGSGSCGPADADARDLIARLLAKDPAARLGSRRGAADVKSHPFFKSLNLALLRSSRPPVVPGAGAGAAPLHRSQSCKAAPTTPPPPTTTKPANATARFDLF</sequence>
<gene>
    <name type="primary">PID</name>
    <name type="ordered locus">Os12g0614600</name>
    <name type="ordered locus">LOC_Os12g42020</name>
</gene>
<keyword id="KW-0067">ATP-binding</keyword>
<keyword id="KW-0927">Auxin signaling pathway</keyword>
<keyword id="KW-0217">Developmental protein</keyword>
<keyword id="KW-0418">Kinase</keyword>
<keyword id="KW-0547">Nucleotide-binding</keyword>
<keyword id="KW-1185">Reference proteome</keyword>
<keyword id="KW-0723">Serine/threonine-protein kinase</keyword>
<keyword id="KW-0808">Transferase</keyword>